<accession>A9BCE2</accession>
<evidence type="ECO:0000255" key="1">
    <source>
        <dbReference type="HAMAP-Rule" id="MF_01399"/>
    </source>
</evidence>
<comment type="function">
    <text evidence="1">F(1)F(0) ATP synthase produces ATP from ADP in the presence of a proton or sodium gradient. F-type ATPases consist of two structural domains, F(1) containing the extramembraneous catalytic core and F(0) containing the membrane proton channel, linked together by a central stalk and a peripheral stalk. During catalysis, ATP synthesis in the catalytic domain of F(1) is coupled via a rotary mechanism of the central stalk subunits to proton translocation.</text>
</comment>
<comment type="function">
    <text evidence="1">Component of the F(0) channel, it forms part of the peripheral stalk, linking F(1) to F(0). The b'-subunit is a diverged and duplicated form of b found in plants and photosynthetic bacteria.</text>
</comment>
<comment type="subunit">
    <text evidence="1">F-type ATPases have 2 components, F(1) - the catalytic core - and F(0) - the membrane proton channel. F(1) has five subunits: alpha(3), beta(3), gamma(1), delta(1), epsilon(1). F(0) has four main subunits: a(1), b(1), b'(1) and c(10-14). The alpha and beta chains form an alternating ring which encloses part of the gamma chain. F(1) is attached to F(0) by a central stalk formed by the gamma and epsilon chains, while a peripheral stalk is formed by the delta, b and b' chains.</text>
</comment>
<comment type="subcellular location">
    <subcellularLocation>
        <location evidence="1">Cellular thylakoid membrane</location>
        <topology evidence="1">Single-pass membrane protein</topology>
    </subcellularLocation>
</comment>
<comment type="similarity">
    <text evidence="1">Belongs to the ATPase B chain family.</text>
</comment>
<keyword id="KW-0066">ATP synthesis</keyword>
<keyword id="KW-0138">CF(0)</keyword>
<keyword id="KW-0375">Hydrogen ion transport</keyword>
<keyword id="KW-0406">Ion transport</keyword>
<keyword id="KW-0472">Membrane</keyword>
<keyword id="KW-1185">Reference proteome</keyword>
<keyword id="KW-0793">Thylakoid</keyword>
<keyword id="KW-0812">Transmembrane</keyword>
<keyword id="KW-1133">Transmembrane helix</keyword>
<keyword id="KW-0813">Transport</keyword>
<organism>
    <name type="scientific">Prochlorococcus marinus (strain MIT 9211)</name>
    <dbReference type="NCBI Taxonomy" id="93059"/>
    <lineage>
        <taxon>Bacteria</taxon>
        <taxon>Bacillati</taxon>
        <taxon>Cyanobacteriota</taxon>
        <taxon>Cyanophyceae</taxon>
        <taxon>Synechococcales</taxon>
        <taxon>Prochlorococcaceae</taxon>
        <taxon>Prochlorococcus</taxon>
    </lineage>
</organism>
<feature type="chain" id="PRO_0000369022" description="ATP synthase subunit b'">
    <location>
        <begin position="1"/>
        <end position="153"/>
    </location>
</feature>
<feature type="transmembrane region" description="Helical" evidence="1">
    <location>
        <begin position="20"/>
        <end position="40"/>
    </location>
</feature>
<proteinExistence type="inferred from homology"/>
<reference key="1">
    <citation type="journal article" date="2007" name="PLoS Genet.">
        <title>Patterns and implications of gene gain and loss in the evolution of Prochlorococcus.</title>
        <authorList>
            <person name="Kettler G.C."/>
            <person name="Martiny A.C."/>
            <person name="Huang K."/>
            <person name="Zucker J."/>
            <person name="Coleman M.L."/>
            <person name="Rodrigue S."/>
            <person name="Chen F."/>
            <person name="Lapidus A."/>
            <person name="Ferriera S."/>
            <person name="Johnson J."/>
            <person name="Steglich C."/>
            <person name="Church G.M."/>
            <person name="Richardson P."/>
            <person name="Chisholm S.W."/>
        </authorList>
    </citation>
    <scope>NUCLEOTIDE SEQUENCE [LARGE SCALE GENOMIC DNA]</scope>
    <source>
        <strain>MIT 9211</strain>
    </source>
</reference>
<name>ATPF2_PROM4</name>
<gene>
    <name evidence="1" type="primary">atpF2</name>
    <name evidence="1" type="synonym">atpG</name>
    <name type="ordered locus">P9211_15731</name>
</gene>
<protein>
    <recommendedName>
        <fullName evidence="1">ATP synthase subunit b'</fullName>
    </recommendedName>
    <alternativeName>
        <fullName evidence="1">ATP synthase F(0) sector subunit b'</fullName>
    </alternativeName>
    <alternativeName>
        <fullName evidence="1">ATPase subunit II</fullName>
    </alternativeName>
    <alternativeName>
        <fullName evidence="1">F-type ATPase subunit b'</fullName>
        <shortName evidence="1">F-ATPase subunit b'</shortName>
    </alternativeName>
</protein>
<dbReference type="EMBL" id="CP000878">
    <property type="protein sequence ID" value="ABX09504.1"/>
    <property type="molecule type" value="Genomic_DNA"/>
</dbReference>
<dbReference type="RefSeq" id="WP_012196125.1">
    <property type="nucleotide sequence ID" value="NC_009976.1"/>
</dbReference>
<dbReference type="SMR" id="A9BCE2"/>
<dbReference type="STRING" id="93059.P9211_15731"/>
<dbReference type="KEGG" id="pmj:P9211_15731"/>
<dbReference type="eggNOG" id="COG0711">
    <property type="taxonomic scope" value="Bacteria"/>
</dbReference>
<dbReference type="HOGENOM" id="CLU_079215_9_0_3"/>
<dbReference type="OrthoDB" id="426571at2"/>
<dbReference type="Proteomes" id="UP000000788">
    <property type="component" value="Chromosome"/>
</dbReference>
<dbReference type="GO" id="GO:0031676">
    <property type="term" value="C:plasma membrane-derived thylakoid membrane"/>
    <property type="evidence" value="ECO:0007669"/>
    <property type="project" value="UniProtKB-SubCell"/>
</dbReference>
<dbReference type="GO" id="GO:0045259">
    <property type="term" value="C:proton-transporting ATP synthase complex"/>
    <property type="evidence" value="ECO:0007669"/>
    <property type="project" value="UniProtKB-KW"/>
</dbReference>
<dbReference type="GO" id="GO:0046933">
    <property type="term" value="F:proton-transporting ATP synthase activity, rotational mechanism"/>
    <property type="evidence" value="ECO:0007669"/>
    <property type="project" value="UniProtKB-UniRule"/>
</dbReference>
<dbReference type="GO" id="GO:0046961">
    <property type="term" value="F:proton-transporting ATPase activity, rotational mechanism"/>
    <property type="evidence" value="ECO:0007669"/>
    <property type="project" value="TreeGrafter"/>
</dbReference>
<dbReference type="CDD" id="cd06503">
    <property type="entry name" value="ATP-synt_Fo_b"/>
    <property type="match status" value="1"/>
</dbReference>
<dbReference type="Gene3D" id="1.20.5.620">
    <property type="entry name" value="F1F0 ATP synthase subunit B, membrane domain"/>
    <property type="match status" value="1"/>
</dbReference>
<dbReference type="HAMAP" id="MF_01398">
    <property type="entry name" value="ATP_synth_b_bprime"/>
    <property type="match status" value="1"/>
</dbReference>
<dbReference type="HAMAP" id="MF_01399">
    <property type="entry name" value="ATP_synth_bprime"/>
    <property type="match status" value="1"/>
</dbReference>
<dbReference type="InterPro" id="IPR034679">
    <property type="entry name" value="ATP_synth_b"/>
</dbReference>
<dbReference type="InterPro" id="IPR028987">
    <property type="entry name" value="ATP_synth_B-like_membr_sf"/>
</dbReference>
<dbReference type="InterPro" id="IPR002146">
    <property type="entry name" value="ATP_synth_b/b'su_bac/chlpt"/>
</dbReference>
<dbReference type="InterPro" id="IPR050059">
    <property type="entry name" value="ATP_synthase_B_chain"/>
</dbReference>
<dbReference type="NCBIfam" id="NF005607">
    <property type="entry name" value="PRK07353.1"/>
    <property type="match status" value="1"/>
</dbReference>
<dbReference type="PANTHER" id="PTHR33445">
    <property type="entry name" value="ATP SYNTHASE SUBUNIT B', CHLOROPLASTIC"/>
    <property type="match status" value="1"/>
</dbReference>
<dbReference type="PANTHER" id="PTHR33445:SF2">
    <property type="entry name" value="ATP SYNTHASE SUBUNIT B', CHLOROPLASTIC"/>
    <property type="match status" value="1"/>
</dbReference>
<dbReference type="Pfam" id="PF00430">
    <property type="entry name" value="ATP-synt_B"/>
    <property type="match status" value="1"/>
</dbReference>
<dbReference type="SUPFAM" id="SSF81573">
    <property type="entry name" value="F1F0 ATP synthase subunit B, membrane domain"/>
    <property type="match status" value="1"/>
</dbReference>
<sequence>MTSLLLFGASEGGLFDFDATLPLMAVQVVLLTFILNALFFKPVGRVVEEREDYVTSSLADAKKKLAEVEKLESDLKNQLKEARLAAQSVINEAETDSENLYREALALATAEANASREEARREIDSQRESALNQLRSDAEKLGDLIVERLLASK</sequence>